<sequence>MKLSRRSFMKANAVAAAAAAAGLSVPGVARAVVGQQEAIKWDKAPCRFCGTGCGVLVGTQQGRVVACQGDPDAPVNRGLNCIKGYFLPKIMYGKDRLTQPMLRMKDGSYHKDGEFTPVSWEQAFDVMEEKFKTSLKEKGPEAIGMFGSGQWTIWEGYAAAKLFKAGFRSNNIDPNARHCMASAVVGFMRTFGMDEPMGCYDDIEQADAFVLWGSNMAEMHPILWSRITNRRLSDPNVKVAVLSTFQHRSFELADNGIVFTPQSDLVILNYIANYIIQNNAVNQDFFTKHVNLRKGATDIGYGLRPTHPLEKAAKNPGSDASEPMSFDEYKAFVAEYTLDKTAEMTGVPKDQLEQLAQLYADPNKRVISYWTMGFNQHTRGVWANNLVYNLHLLTGKISQPGCGPFSLTGQPSACGTAREVGTFSHRLPADMVVTNEKHRDICEKHWQIPAGTIPAKVGLHAVAQDRALKDGKLNVYWVMCNNNMQAGPNINEDRMPGWRDPRNFIIVSDPYPTVSALSADLILPTAMWVEKEGAYGNAERRTQFWRQQIKAPGEAKSDLWQLVQFSRRFKTEEVWPEALLAQKPELRGKTLYDVLFATPAVSKFPLSELKEDQLNDESRELGFYLQKGLFEEYAWFGRGHGHDLAPFDDYHNARGLRWPVVEGKETQWRYSEGNDPYVKAGEGYKFYGKPDGKAVIFALPFEPAAESPDNEYDLWLSTGRVLEHWHTGSMTRRVPELHRAFPEAVVFIHPLDAKARDLRRGDKVKVSSRRGEVISIVETRGRNRPPQGLVYMPFFDAAQLVNNLTLDATDPLSKETDFKKCAVKLAKV</sequence>
<dbReference type="EC" id="1.9.6.1" evidence="1"/>
<dbReference type="EMBL" id="CP001113">
    <property type="protein sequence ID" value="ACF62660.1"/>
    <property type="molecule type" value="Genomic_DNA"/>
</dbReference>
<dbReference type="RefSeq" id="WP_000778097.1">
    <property type="nucleotide sequence ID" value="NC_011080.1"/>
</dbReference>
<dbReference type="SMR" id="B4SYT3"/>
<dbReference type="KEGG" id="see:SNSL254_A2443"/>
<dbReference type="HOGENOM" id="CLU_000422_13_4_6"/>
<dbReference type="Proteomes" id="UP000008824">
    <property type="component" value="Chromosome"/>
</dbReference>
<dbReference type="GO" id="GO:0016020">
    <property type="term" value="C:membrane"/>
    <property type="evidence" value="ECO:0007669"/>
    <property type="project" value="TreeGrafter"/>
</dbReference>
<dbReference type="GO" id="GO:0009325">
    <property type="term" value="C:nitrate reductase complex"/>
    <property type="evidence" value="ECO:0007669"/>
    <property type="project" value="TreeGrafter"/>
</dbReference>
<dbReference type="GO" id="GO:0042597">
    <property type="term" value="C:periplasmic space"/>
    <property type="evidence" value="ECO:0007669"/>
    <property type="project" value="UniProtKB-SubCell"/>
</dbReference>
<dbReference type="GO" id="GO:0051539">
    <property type="term" value="F:4 iron, 4 sulfur cluster binding"/>
    <property type="evidence" value="ECO:0007669"/>
    <property type="project" value="UniProtKB-KW"/>
</dbReference>
<dbReference type="GO" id="GO:0009055">
    <property type="term" value="F:electron transfer activity"/>
    <property type="evidence" value="ECO:0007669"/>
    <property type="project" value="UniProtKB-UniRule"/>
</dbReference>
<dbReference type="GO" id="GO:0005506">
    <property type="term" value="F:iron ion binding"/>
    <property type="evidence" value="ECO:0007669"/>
    <property type="project" value="UniProtKB-UniRule"/>
</dbReference>
<dbReference type="GO" id="GO:0030151">
    <property type="term" value="F:molybdenum ion binding"/>
    <property type="evidence" value="ECO:0007669"/>
    <property type="project" value="InterPro"/>
</dbReference>
<dbReference type="GO" id="GO:0043546">
    <property type="term" value="F:molybdopterin cofactor binding"/>
    <property type="evidence" value="ECO:0007669"/>
    <property type="project" value="InterPro"/>
</dbReference>
<dbReference type="GO" id="GO:0050140">
    <property type="term" value="F:nitrate reductase (cytochrome) activity"/>
    <property type="evidence" value="ECO:0007669"/>
    <property type="project" value="UniProtKB-EC"/>
</dbReference>
<dbReference type="GO" id="GO:0045333">
    <property type="term" value="P:cellular respiration"/>
    <property type="evidence" value="ECO:0007669"/>
    <property type="project" value="UniProtKB-ARBA"/>
</dbReference>
<dbReference type="GO" id="GO:0006777">
    <property type="term" value="P:Mo-molybdopterin cofactor biosynthetic process"/>
    <property type="evidence" value="ECO:0007669"/>
    <property type="project" value="UniProtKB-UniRule"/>
</dbReference>
<dbReference type="GO" id="GO:0042128">
    <property type="term" value="P:nitrate assimilation"/>
    <property type="evidence" value="ECO:0007669"/>
    <property type="project" value="UniProtKB-UniRule"/>
</dbReference>
<dbReference type="CDD" id="cd02791">
    <property type="entry name" value="MopB_CT_Nitrate-R-NapA-like"/>
    <property type="match status" value="1"/>
</dbReference>
<dbReference type="CDD" id="cd02754">
    <property type="entry name" value="MopB_Nitrate-R-NapA-like"/>
    <property type="match status" value="1"/>
</dbReference>
<dbReference type="FunFam" id="2.40.40.20:FF:000005">
    <property type="entry name" value="Periplasmic nitrate reductase"/>
    <property type="match status" value="1"/>
</dbReference>
<dbReference type="FunFam" id="3.40.228.10:FF:000001">
    <property type="entry name" value="Periplasmic nitrate reductase"/>
    <property type="match status" value="1"/>
</dbReference>
<dbReference type="Gene3D" id="2.40.40.20">
    <property type="match status" value="1"/>
</dbReference>
<dbReference type="Gene3D" id="3.30.200.210">
    <property type="match status" value="1"/>
</dbReference>
<dbReference type="Gene3D" id="3.40.50.740">
    <property type="match status" value="1"/>
</dbReference>
<dbReference type="Gene3D" id="3.40.228.10">
    <property type="entry name" value="Dimethylsulfoxide Reductase, domain 2"/>
    <property type="match status" value="1"/>
</dbReference>
<dbReference type="HAMAP" id="MF_01630">
    <property type="entry name" value="Nitrate_reduct_NapA"/>
    <property type="match status" value="1"/>
</dbReference>
<dbReference type="InterPro" id="IPR009010">
    <property type="entry name" value="Asp_de-COase-like_dom_sf"/>
</dbReference>
<dbReference type="InterPro" id="IPR041957">
    <property type="entry name" value="CT_Nitrate-R-NapA-like"/>
</dbReference>
<dbReference type="InterPro" id="IPR006657">
    <property type="entry name" value="MoPterin_dinucl-bd_dom"/>
</dbReference>
<dbReference type="InterPro" id="IPR006656">
    <property type="entry name" value="Mopterin_OxRdtase"/>
</dbReference>
<dbReference type="InterPro" id="IPR006963">
    <property type="entry name" value="Mopterin_OxRdtase_4Fe-4S_dom"/>
</dbReference>
<dbReference type="InterPro" id="IPR027467">
    <property type="entry name" value="MopterinOxRdtase_cofactor_BS"/>
</dbReference>
<dbReference type="InterPro" id="IPR010051">
    <property type="entry name" value="Periplasm_NO3_reductase_lsu"/>
</dbReference>
<dbReference type="InterPro" id="IPR050123">
    <property type="entry name" value="Prok_molybdopt-oxidoreductase"/>
</dbReference>
<dbReference type="InterPro" id="IPR006311">
    <property type="entry name" value="TAT_signal"/>
</dbReference>
<dbReference type="InterPro" id="IPR019546">
    <property type="entry name" value="TAT_signal_bac_arc"/>
</dbReference>
<dbReference type="NCBIfam" id="TIGR01706">
    <property type="entry name" value="NAPA"/>
    <property type="match status" value="1"/>
</dbReference>
<dbReference type="NCBIfam" id="NF010055">
    <property type="entry name" value="PRK13532.1"/>
    <property type="match status" value="1"/>
</dbReference>
<dbReference type="NCBIfam" id="TIGR01409">
    <property type="entry name" value="TAT_signal_seq"/>
    <property type="match status" value="1"/>
</dbReference>
<dbReference type="PANTHER" id="PTHR43105:SF11">
    <property type="entry name" value="PERIPLASMIC NITRATE REDUCTASE"/>
    <property type="match status" value="1"/>
</dbReference>
<dbReference type="PANTHER" id="PTHR43105">
    <property type="entry name" value="RESPIRATORY NITRATE REDUCTASE"/>
    <property type="match status" value="1"/>
</dbReference>
<dbReference type="Pfam" id="PF04879">
    <property type="entry name" value="Molybdop_Fe4S4"/>
    <property type="match status" value="1"/>
</dbReference>
<dbReference type="Pfam" id="PF00384">
    <property type="entry name" value="Molybdopterin"/>
    <property type="match status" value="1"/>
</dbReference>
<dbReference type="Pfam" id="PF01568">
    <property type="entry name" value="Molydop_binding"/>
    <property type="match status" value="1"/>
</dbReference>
<dbReference type="SMART" id="SM00926">
    <property type="entry name" value="Molybdop_Fe4S4"/>
    <property type="match status" value="1"/>
</dbReference>
<dbReference type="SUPFAM" id="SSF50692">
    <property type="entry name" value="ADC-like"/>
    <property type="match status" value="1"/>
</dbReference>
<dbReference type="SUPFAM" id="SSF53706">
    <property type="entry name" value="Formate dehydrogenase/DMSO reductase, domains 1-3"/>
    <property type="match status" value="1"/>
</dbReference>
<dbReference type="PROSITE" id="PS51669">
    <property type="entry name" value="4FE4S_MOW_BIS_MGD"/>
    <property type="match status" value="1"/>
</dbReference>
<dbReference type="PROSITE" id="PS00551">
    <property type="entry name" value="MOLYBDOPTERIN_PROK_1"/>
    <property type="match status" value="1"/>
</dbReference>
<dbReference type="PROSITE" id="PS51318">
    <property type="entry name" value="TAT"/>
    <property type="match status" value="1"/>
</dbReference>
<accession>B4SYT3</accession>
<keyword id="KW-0004">4Fe-4S</keyword>
<keyword id="KW-0249">Electron transport</keyword>
<keyword id="KW-0408">Iron</keyword>
<keyword id="KW-0411">Iron-sulfur</keyword>
<keyword id="KW-0479">Metal-binding</keyword>
<keyword id="KW-0500">Molybdenum</keyword>
<keyword id="KW-0534">Nitrate assimilation</keyword>
<keyword id="KW-0560">Oxidoreductase</keyword>
<keyword id="KW-0574">Periplasm</keyword>
<keyword id="KW-0732">Signal</keyword>
<keyword id="KW-0813">Transport</keyword>
<proteinExistence type="inferred from homology"/>
<name>NAPA_SALNS</name>
<feature type="signal peptide" description="Tat-type signal" evidence="1">
    <location>
        <begin position="1"/>
        <end position="31"/>
    </location>
</feature>
<feature type="chain" id="PRO_1000186372" description="Periplasmic nitrate reductase" evidence="1">
    <location>
        <begin position="32"/>
        <end position="828"/>
    </location>
</feature>
<feature type="domain" description="4Fe-4S Mo/W bis-MGD-type" evidence="1">
    <location>
        <begin position="39"/>
        <end position="95"/>
    </location>
</feature>
<feature type="binding site" evidence="1">
    <location>
        <position position="46"/>
    </location>
    <ligand>
        <name>[4Fe-4S] cluster</name>
        <dbReference type="ChEBI" id="CHEBI:49883"/>
    </ligand>
</feature>
<feature type="binding site" evidence="1">
    <location>
        <position position="49"/>
    </location>
    <ligand>
        <name>[4Fe-4S] cluster</name>
        <dbReference type="ChEBI" id="CHEBI:49883"/>
    </ligand>
</feature>
<feature type="binding site" evidence="1">
    <location>
        <position position="53"/>
    </location>
    <ligand>
        <name>[4Fe-4S] cluster</name>
        <dbReference type="ChEBI" id="CHEBI:49883"/>
    </ligand>
</feature>
<feature type="binding site" evidence="1">
    <location>
        <position position="81"/>
    </location>
    <ligand>
        <name>[4Fe-4S] cluster</name>
        <dbReference type="ChEBI" id="CHEBI:49883"/>
    </ligand>
</feature>
<feature type="binding site" evidence="1">
    <location>
        <position position="83"/>
    </location>
    <ligand>
        <name>Mo-bis(molybdopterin guanine dinucleotide)</name>
        <dbReference type="ChEBI" id="CHEBI:60539"/>
    </ligand>
</feature>
<feature type="binding site" evidence="1">
    <location>
        <position position="150"/>
    </location>
    <ligand>
        <name>Mo-bis(molybdopterin guanine dinucleotide)</name>
        <dbReference type="ChEBI" id="CHEBI:60539"/>
    </ligand>
</feature>
<feature type="binding site" evidence="1">
    <location>
        <position position="175"/>
    </location>
    <ligand>
        <name>Mo-bis(molybdopterin guanine dinucleotide)</name>
        <dbReference type="ChEBI" id="CHEBI:60539"/>
    </ligand>
</feature>
<feature type="binding site" evidence="1">
    <location>
        <position position="179"/>
    </location>
    <ligand>
        <name>Mo-bis(molybdopterin guanine dinucleotide)</name>
        <dbReference type="ChEBI" id="CHEBI:60539"/>
    </ligand>
</feature>
<feature type="binding site" evidence="1">
    <location>
        <begin position="212"/>
        <end position="219"/>
    </location>
    <ligand>
        <name>Mo-bis(molybdopterin guanine dinucleotide)</name>
        <dbReference type="ChEBI" id="CHEBI:60539"/>
    </ligand>
</feature>
<feature type="binding site" evidence="1">
    <location>
        <begin position="243"/>
        <end position="247"/>
    </location>
    <ligand>
        <name>Mo-bis(molybdopterin guanine dinucleotide)</name>
        <dbReference type="ChEBI" id="CHEBI:60539"/>
    </ligand>
</feature>
<feature type="binding site" evidence="1">
    <location>
        <begin position="262"/>
        <end position="264"/>
    </location>
    <ligand>
        <name>Mo-bis(molybdopterin guanine dinucleotide)</name>
        <dbReference type="ChEBI" id="CHEBI:60539"/>
    </ligand>
</feature>
<feature type="binding site" evidence="1">
    <location>
        <position position="372"/>
    </location>
    <ligand>
        <name>Mo-bis(molybdopterin guanine dinucleotide)</name>
        <dbReference type="ChEBI" id="CHEBI:60539"/>
    </ligand>
</feature>
<feature type="binding site" evidence="1">
    <location>
        <position position="376"/>
    </location>
    <ligand>
        <name>Mo-bis(molybdopterin guanine dinucleotide)</name>
        <dbReference type="ChEBI" id="CHEBI:60539"/>
    </ligand>
</feature>
<feature type="binding site" evidence="1">
    <location>
        <position position="482"/>
    </location>
    <ligand>
        <name>Mo-bis(molybdopterin guanine dinucleotide)</name>
        <dbReference type="ChEBI" id="CHEBI:60539"/>
    </ligand>
</feature>
<feature type="binding site" evidence="1">
    <location>
        <begin position="508"/>
        <end position="509"/>
    </location>
    <ligand>
        <name>Mo-bis(molybdopterin guanine dinucleotide)</name>
        <dbReference type="ChEBI" id="CHEBI:60539"/>
    </ligand>
</feature>
<feature type="binding site" evidence="1">
    <location>
        <position position="531"/>
    </location>
    <ligand>
        <name>Mo-bis(molybdopterin guanine dinucleotide)</name>
        <dbReference type="ChEBI" id="CHEBI:60539"/>
    </ligand>
</feature>
<feature type="binding site" evidence="1">
    <location>
        <position position="558"/>
    </location>
    <ligand>
        <name>Mo-bis(molybdopterin guanine dinucleotide)</name>
        <dbReference type="ChEBI" id="CHEBI:60539"/>
    </ligand>
</feature>
<feature type="binding site" evidence="1">
    <location>
        <begin position="718"/>
        <end position="727"/>
    </location>
    <ligand>
        <name>Mo-bis(molybdopterin guanine dinucleotide)</name>
        <dbReference type="ChEBI" id="CHEBI:60539"/>
    </ligand>
</feature>
<feature type="binding site" evidence="1">
    <location>
        <position position="794"/>
    </location>
    <ligand>
        <name>substrate</name>
    </ligand>
</feature>
<feature type="binding site" evidence="1">
    <location>
        <position position="802"/>
    </location>
    <ligand>
        <name>Mo-bis(molybdopterin guanine dinucleotide)</name>
        <dbReference type="ChEBI" id="CHEBI:60539"/>
    </ligand>
</feature>
<feature type="binding site" evidence="1">
    <location>
        <position position="819"/>
    </location>
    <ligand>
        <name>Mo-bis(molybdopterin guanine dinucleotide)</name>
        <dbReference type="ChEBI" id="CHEBI:60539"/>
    </ligand>
</feature>
<protein>
    <recommendedName>
        <fullName evidence="1">Periplasmic nitrate reductase</fullName>
        <ecNumber evidence="1">1.9.6.1</ecNumber>
    </recommendedName>
</protein>
<evidence type="ECO:0000255" key="1">
    <source>
        <dbReference type="HAMAP-Rule" id="MF_01630"/>
    </source>
</evidence>
<comment type="function">
    <text evidence="1">Catalytic subunit of the periplasmic nitrate reductase complex NapAB. Receives electrons from NapB and catalyzes the reduction of nitrate to nitrite.</text>
</comment>
<comment type="catalytic activity">
    <reaction evidence="1">
        <text>2 Fe(II)-[cytochrome] + nitrate + 2 H(+) = 2 Fe(III)-[cytochrome] + nitrite + H2O</text>
        <dbReference type="Rhea" id="RHEA:12909"/>
        <dbReference type="Rhea" id="RHEA-COMP:11777"/>
        <dbReference type="Rhea" id="RHEA-COMP:11778"/>
        <dbReference type="ChEBI" id="CHEBI:15377"/>
        <dbReference type="ChEBI" id="CHEBI:15378"/>
        <dbReference type="ChEBI" id="CHEBI:16301"/>
        <dbReference type="ChEBI" id="CHEBI:17632"/>
        <dbReference type="ChEBI" id="CHEBI:29033"/>
        <dbReference type="ChEBI" id="CHEBI:29034"/>
        <dbReference type="EC" id="1.9.6.1"/>
    </reaction>
</comment>
<comment type="cofactor">
    <cofactor evidence="1">
        <name>[4Fe-4S] cluster</name>
        <dbReference type="ChEBI" id="CHEBI:49883"/>
    </cofactor>
    <text evidence="1">Binds 1 [4Fe-4S] cluster.</text>
</comment>
<comment type="cofactor">
    <cofactor evidence="1">
        <name>Mo-bis(molybdopterin guanine dinucleotide)</name>
        <dbReference type="ChEBI" id="CHEBI:60539"/>
    </cofactor>
    <text evidence="1">Binds 1 molybdenum-bis(molybdopterin guanine dinucleotide) (Mo-bis-MGD) cofactor per subunit.</text>
</comment>
<comment type="subunit">
    <text evidence="1">Component of the periplasmic nitrate reductase NapAB complex composed of NapA and NapB.</text>
</comment>
<comment type="subcellular location">
    <subcellularLocation>
        <location evidence="1">Periplasm</location>
    </subcellularLocation>
</comment>
<comment type="PTM">
    <text evidence="1">Predicted to be exported by the Tat system. The position of the signal peptide cleavage has not been experimentally proven.</text>
</comment>
<comment type="similarity">
    <text evidence="1">Belongs to the prokaryotic molybdopterin-containing oxidoreductase family. NasA/NapA/NarB subfamily.</text>
</comment>
<reference key="1">
    <citation type="journal article" date="2011" name="J. Bacteriol.">
        <title>Comparative genomics of 28 Salmonella enterica isolates: evidence for CRISPR-mediated adaptive sublineage evolution.</title>
        <authorList>
            <person name="Fricke W.F."/>
            <person name="Mammel M.K."/>
            <person name="McDermott P.F."/>
            <person name="Tartera C."/>
            <person name="White D.G."/>
            <person name="Leclerc J.E."/>
            <person name="Ravel J."/>
            <person name="Cebula T.A."/>
        </authorList>
    </citation>
    <scope>NUCLEOTIDE SEQUENCE [LARGE SCALE GENOMIC DNA]</scope>
    <source>
        <strain>SL254</strain>
    </source>
</reference>
<gene>
    <name evidence="1" type="primary">napA</name>
    <name type="ordered locus">SNSL254_A2443</name>
</gene>
<organism>
    <name type="scientific">Salmonella newport (strain SL254)</name>
    <dbReference type="NCBI Taxonomy" id="423368"/>
    <lineage>
        <taxon>Bacteria</taxon>
        <taxon>Pseudomonadati</taxon>
        <taxon>Pseudomonadota</taxon>
        <taxon>Gammaproteobacteria</taxon>
        <taxon>Enterobacterales</taxon>
        <taxon>Enterobacteriaceae</taxon>
        <taxon>Salmonella</taxon>
    </lineage>
</organism>